<dbReference type="EMBL" id="AE013218">
    <property type="protein sequence ID" value="AAM67712.1"/>
    <property type="molecule type" value="Genomic_DNA"/>
</dbReference>
<dbReference type="RefSeq" id="WP_011053679.1">
    <property type="nucleotide sequence ID" value="NC_004061.1"/>
</dbReference>
<dbReference type="SMR" id="Q8K9Z0"/>
<dbReference type="STRING" id="198804.BUsg_144"/>
<dbReference type="GeneID" id="93003614"/>
<dbReference type="KEGG" id="bas:BUsg_144"/>
<dbReference type="eggNOG" id="COG0268">
    <property type="taxonomic scope" value="Bacteria"/>
</dbReference>
<dbReference type="HOGENOM" id="CLU_160655_4_0_6"/>
<dbReference type="Proteomes" id="UP000000416">
    <property type="component" value="Chromosome"/>
</dbReference>
<dbReference type="GO" id="GO:0005829">
    <property type="term" value="C:cytosol"/>
    <property type="evidence" value="ECO:0007669"/>
    <property type="project" value="TreeGrafter"/>
</dbReference>
<dbReference type="GO" id="GO:0015935">
    <property type="term" value="C:small ribosomal subunit"/>
    <property type="evidence" value="ECO:0007669"/>
    <property type="project" value="TreeGrafter"/>
</dbReference>
<dbReference type="GO" id="GO:0070181">
    <property type="term" value="F:small ribosomal subunit rRNA binding"/>
    <property type="evidence" value="ECO:0007669"/>
    <property type="project" value="TreeGrafter"/>
</dbReference>
<dbReference type="GO" id="GO:0003735">
    <property type="term" value="F:structural constituent of ribosome"/>
    <property type="evidence" value="ECO:0007669"/>
    <property type="project" value="InterPro"/>
</dbReference>
<dbReference type="GO" id="GO:0006412">
    <property type="term" value="P:translation"/>
    <property type="evidence" value="ECO:0007669"/>
    <property type="project" value="UniProtKB-UniRule"/>
</dbReference>
<dbReference type="FunFam" id="1.20.58.110:FF:000001">
    <property type="entry name" value="30S ribosomal protein S20"/>
    <property type="match status" value="1"/>
</dbReference>
<dbReference type="Gene3D" id="1.20.58.110">
    <property type="entry name" value="Ribosomal protein S20"/>
    <property type="match status" value="1"/>
</dbReference>
<dbReference type="HAMAP" id="MF_00500">
    <property type="entry name" value="Ribosomal_bS20"/>
    <property type="match status" value="1"/>
</dbReference>
<dbReference type="InterPro" id="IPR002583">
    <property type="entry name" value="Ribosomal_bS20"/>
</dbReference>
<dbReference type="InterPro" id="IPR036510">
    <property type="entry name" value="Ribosomal_bS20_sf"/>
</dbReference>
<dbReference type="NCBIfam" id="TIGR00029">
    <property type="entry name" value="S20"/>
    <property type="match status" value="1"/>
</dbReference>
<dbReference type="PANTHER" id="PTHR33398">
    <property type="entry name" value="30S RIBOSOMAL PROTEIN S20"/>
    <property type="match status" value="1"/>
</dbReference>
<dbReference type="PANTHER" id="PTHR33398:SF1">
    <property type="entry name" value="SMALL RIBOSOMAL SUBUNIT PROTEIN BS20C"/>
    <property type="match status" value="1"/>
</dbReference>
<dbReference type="Pfam" id="PF01649">
    <property type="entry name" value="Ribosomal_S20p"/>
    <property type="match status" value="1"/>
</dbReference>
<dbReference type="SUPFAM" id="SSF46992">
    <property type="entry name" value="Ribosomal protein S20"/>
    <property type="match status" value="1"/>
</dbReference>
<protein>
    <recommendedName>
        <fullName evidence="1">Small ribosomal subunit protein bS20</fullName>
    </recommendedName>
    <alternativeName>
        <fullName evidence="3">30S ribosomal protein S20</fullName>
    </alternativeName>
</protein>
<sequence>MANIKSAKKDSIISEERRKKNASQRSKMRTFIKKVRLAISSGDKEKSYDAFKKMQPIIDKYATKGLIHKNKAARYKSILSFKIAKLHKN</sequence>
<comment type="function">
    <text evidence="1">Binds directly to 16S ribosomal RNA.</text>
</comment>
<comment type="similarity">
    <text evidence="1">Belongs to the bacterial ribosomal protein bS20 family.</text>
</comment>
<feature type="chain" id="PRO_0000167935" description="Small ribosomal subunit protein bS20">
    <location>
        <begin position="1"/>
        <end position="89"/>
    </location>
</feature>
<feature type="region of interest" description="Disordered" evidence="2">
    <location>
        <begin position="1"/>
        <end position="27"/>
    </location>
</feature>
<feature type="compositionally biased region" description="Basic and acidic residues" evidence="2">
    <location>
        <begin position="7"/>
        <end position="18"/>
    </location>
</feature>
<name>RS20_BUCAP</name>
<evidence type="ECO:0000255" key="1">
    <source>
        <dbReference type="HAMAP-Rule" id="MF_00500"/>
    </source>
</evidence>
<evidence type="ECO:0000256" key="2">
    <source>
        <dbReference type="SAM" id="MobiDB-lite"/>
    </source>
</evidence>
<evidence type="ECO:0000305" key="3"/>
<reference key="1">
    <citation type="journal article" date="2002" name="Science">
        <title>50 million years of genomic stasis in endosymbiotic bacteria.</title>
        <authorList>
            <person name="Tamas I."/>
            <person name="Klasson L."/>
            <person name="Canbaeck B."/>
            <person name="Naeslund A.K."/>
            <person name="Eriksson A.-S."/>
            <person name="Wernegreen J.J."/>
            <person name="Sandstroem J.P."/>
            <person name="Moran N.A."/>
            <person name="Andersson S.G.E."/>
        </authorList>
    </citation>
    <scope>NUCLEOTIDE SEQUENCE [LARGE SCALE GENOMIC DNA]</scope>
    <source>
        <strain>Sg</strain>
    </source>
</reference>
<keyword id="KW-0687">Ribonucleoprotein</keyword>
<keyword id="KW-0689">Ribosomal protein</keyword>
<keyword id="KW-0694">RNA-binding</keyword>
<keyword id="KW-0699">rRNA-binding</keyword>
<proteinExistence type="inferred from homology"/>
<gene>
    <name evidence="1" type="primary">rpsT</name>
    <name type="ordered locus">BUsg_144</name>
</gene>
<accession>Q8K9Z0</accession>
<organism>
    <name type="scientific">Buchnera aphidicola subsp. Schizaphis graminum (strain Sg)</name>
    <dbReference type="NCBI Taxonomy" id="198804"/>
    <lineage>
        <taxon>Bacteria</taxon>
        <taxon>Pseudomonadati</taxon>
        <taxon>Pseudomonadota</taxon>
        <taxon>Gammaproteobacteria</taxon>
        <taxon>Enterobacterales</taxon>
        <taxon>Erwiniaceae</taxon>
        <taxon>Buchnera</taxon>
    </lineage>
</organism>